<accession>Q9NZV8</accession>
<accession>O95012</accession>
<accession>O95021</accession>
<accession>Q2TBD3</accession>
<accession>Q9UBY7</accession>
<accession>Q9UN98</accession>
<accession>Q9UNH9</accession>
<name>KCND2_HUMAN</name>
<comment type="function">
    <text evidence="2 3 5 7 10 14 15 16 19 21 22 24 25 26 27">Voltage-gated potassium channel that mediates transmembrane potassium transport in excitable membranes, primarily in the brain. Mediates the major part of the dendritic A-type current I(SA) in brain neurons (By similarity). This current is activated at membrane potentials that are below the threshold for action potentials. It regulates neuronal excitability, prolongs the latency before the first spike in a series of action potentials, regulates the frequency of repetitive action potential firing, shortens the duration of action potentials and regulates the back-propagation of action potentials from the neuronal cell body to the dendrites. Contributes to the regulation of the circadian rhythm of action potential firing in suprachiasmatic nucleus neurons, which regulates the circadian rhythm of locomotor activity (By similarity). Functions downstream of the metabotropic glutamate receptor GRM5 and plays a role in neuronal excitability and in nociception mediated by activation of GRM5 (By similarity). Mediates the transient outward current I(to) in rodent heart left ventricle apex cells, but not in human heart, where this current is mediated by another family member. Forms tetrameric potassium-selective channels through which potassium ions pass in accordance with their electrochemical gradient (PubMed:10551270, PubMed:11507158, PubMed:14623880, PubMed:14695263, PubMed:14980201, PubMed:15454437, PubMed:16934482, PubMed:19171772, PubMed:24501278, PubMed:24811166, PubMed:34552243, PubMed:35597238). The channel alternates between opened and closed conformations in response to the voltage difference across the membrane (PubMed:11507158). Can form functional homotetrameric channels and heterotetrameric channels that contain variable proportions of KCND2 and KCND3; channel properties depend on the type of pore-forming alpha subunits that are part of the channel. In vivo, membranes probably contain a mixture of heteromeric potassium channel complexes. Interaction with specific isoforms of the regulatory subunits KCNIP1, KCNIP2, KCNIP3 or KCNIP4 strongly increases expression at the cell surface and thereby increases channel activity; it modulates the kinetics of channel activation and inactivation, shifts the threshold for channel activation to more negative voltage values, shifts the threshold for inactivation to less negative voltages and accelerates recovery after inactivation (PubMed:14623880, PubMed:14980201, PubMed:15454437, PubMed:19171772, PubMed:24501278, PubMed:24811166). Likewise, interaction with DPP6 or DPP10 promotes expression at the cell membrane and regulates both channel characteristics and activity (By similarity). Upon depolarization, the channel goes from a resting closed state (C state) to an activated but non-conducting state (C* state), from there, the channel may either inactivate (I state) or open (O state) (PubMed:35597238).</text>
</comment>
<comment type="catalytic activity">
    <reaction evidence="5 10 14 15 16 19 21 22 24 25 26">
        <text>K(+)(in) = K(+)(out)</text>
        <dbReference type="Rhea" id="RHEA:29463"/>
        <dbReference type="ChEBI" id="CHEBI:29103"/>
    </reaction>
</comment>
<comment type="biophysicochemical properties">
    <kinetics>
        <text evidence="29 33">Homotetrameric channels activate rapidly, i.e within a few msec. After that, they inactivate rapidly, i.e within about 50-100 msec. The voltage-dependence of activation and inactivation and other channel characteristics vary depending on the experimental conditions, the expression system and the presence or absence of ancillary subunits. Homotetrameric channels have a unitary conductance of about 4 pS when expressed in a heterologous system. For the activation of homotetrameric channels expressed in xenopus oocytes, the voltage at half-maximal amplitude is about -10 mV. The time constant for inactivation is about 20 msec. For inactivation, the voltage at half-maximal amplitude is -62 mV. The time constant for recovery after inactivation is about 70 msec.</text>
    </kinetics>
</comment>
<comment type="subunit">
    <text evidence="2 3 6 8 9 11 13 14 16 17 18 19 21 23 25 26 27 35">Homotetramer or heterotetramer with KCND1 or KCND3 (PubMed:14980201, PubMed:16934482, PubMed:24811166, PubMed:34552243, PubMed:35597238). Associates with the regulatory subunits KCNIP2, KCNIP3 and KCNIP4 (PubMed:11287421, PubMed:11847232, PubMed:12451113, PubMed:14623880, PubMed:14980201, PubMed:15358149, PubMed:24811166, PubMed:35597238). Interacts with the regulatory subunit KCNIP1; this interaction mediates the capture of both the N- and C-terminus of KCND2, preventing N-type inactivation and stabilizing the S6 conformation, thereby accelerating closed state inactivation and recovery (PubMed:10676964, PubMed:14980207, PubMed:15358149, PubMed:34552243). In vivo, probably exists as heteromeric complex containing variable proportions of KCND1, KCND2, KCND3, KCNIP1, KCNIP2, KCNIP3, KCNIP4, DPP6 and DPP10 (PubMed:19171772). The tetrameric channel can associate with up to four regulatory subunits, such as KCNIP2 or KCNIP4 (PubMed:14623880, PubMed:14980201, PubMed:24811166). Interaction with four KCNIP4 chains does not reduce interaction with DPP10 (PubMed:24811166). Interacts with DLG4 and NCS1/FREQ (By similarity). Interacts with DLG1 (PubMed:19213956). Probably part of a complex consisting of KCNIP1, KCNIP2 isoform 3 and KCND2 (PubMed:15358149). Interacts with FLNA, FLNC and DPP10 (PubMed:11102480, PubMed:15454437). Interacts (via S1 and S2 helices) with DPP6; this interaction stabilizes the conformation of the S1-S2 helices and facilitates S4 conformational change, including S4 sliding up and down, thereby accelerating activation, inactivation, and recovery (PubMed:15454437, PubMed:34552243, PubMed:35597238).</text>
</comment>
<comment type="interaction">
    <interactant intactId="EBI-1646745">
        <id>Q9NZV8</id>
    </interactant>
    <interactant intactId="EBI-2120635">
        <id>Q9NZI2</id>
        <label>KCNIP1</label>
    </interactant>
    <organismsDiffer>false</organismsDiffer>
    <experiments>4</experiments>
</comment>
<comment type="interaction">
    <interactant intactId="EBI-1646745">
        <id>Q9NZV8</id>
    </interactant>
    <interactant intactId="EBI-1052975">
        <id>Q9NS61</id>
        <label>KCNIP2</label>
    </interactant>
    <organismsDiffer>false</organismsDiffer>
    <experiments>3</experiments>
</comment>
<comment type="interaction">
    <interactant intactId="EBI-1646745">
        <id>Q9NZV8</id>
    </interactant>
    <interactant intactId="EBI-1053010">
        <id>Q9NS61-3</id>
        <label>KCNIP2</label>
    </interactant>
    <organismsDiffer>false</organismsDiffer>
    <experiments>3</experiments>
</comment>
<comment type="subcellular location">
    <subcellularLocation>
        <location evidence="8 10 14 15 16 19 21 22 24 25">Cell membrane</location>
        <topology evidence="8 16 28">Multi-pass membrane protein</topology>
    </subcellularLocation>
    <subcellularLocation>
        <location evidence="8">Cell projection</location>
        <location evidence="8">Dendrite</location>
    </subcellularLocation>
    <subcellularLocation>
        <location evidence="2">Synapse</location>
    </subcellularLocation>
    <subcellularLocation>
        <location evidence="2">Perikaryon</location>
    </subcellularLocation>
    <subcellularLocation>
        <location evidence="2">Postsynaptic cell membrane</location>
    </subcellularLocation>
    <subcellularLocation>
        <location evidence="2">Cell projection</location>
        <location evidence="2">Dendritic spine</location>
    </subcellularLocation>
    <subcellularLocation>
        <location evidence="2">Cell junction</location>
    </subcellularLocation>
    <text evidence="2 3 19 25">In neurons, primarily detected on dendrites, dendritic spines and on the neuron cell body, but not on axons. Localized preferentially at the dendrites of pyramidal cells in the hippocampus CA1 layer. Detected at GABAergic synapses. Detected at cell junctions that are distinct from synaptic cell contacts. Detected in lipid rafts. Detected primarily at the endoplasmic reticulum or Golgi when expressed by itself (PubMed:15454437). Interaction with KCNIP1, KCNIP2, KCNIP3 or KCNIP4 promotes expression at the cell membrane (PubMed:15454437, PubMed:24811166). Interaction with DPP6 or DPP10 promotes expression at the cell membrane (By similarity). Internalized from the cell membrane by clathrin-dependent endocytosis in response to activation of AMPA-selective glutamate receptors and PKA-mediated phosphorylation at Ser-552. Redistributed from dendritic spines to the main dendritic shaft in response to activation of AMPA-selective glutamate receptors and activation of PKA (By similarity).</text>
</comment>
<comment type="tissue specificity">
    <text evidence="5 7 12 20">Detected in ovary, in corpus luteum and in granulosa and theca cells in the follicle (at protein level) (PubMed:15991246). Highly expressed throughout the brain (PubMed:10551270, PubMed:10729221). Detected in amygdala, caudate nucleus, cerebellum, hippocampus, substantia nigra and thalamus (PubMed:10551270, PubMed:10729221). Expression is not detectable or very low in heart, kidney, liver, lung, pancreas and skeletal muscle (PubMed:10551270, PubMed:10729221). Not detectable in human heart atrium (PubMed:12395204).</text>
</comment>
<comment type="domain">
    <text evidence="1">The transmembrane segment S4 functions as a voltage-sensor and is characterized by a series of positively charged amino acids at every third position. Channel opening and closing is effected by a conformation change that affects the position and orientation of the voltage-sensor paddle formed by S3 and S4 within the membrane. A transmembrane electric field that is positive inside would push the positively charged S4 segment outwards, thereby opening the pore, while a field that is negative inside would pull the S4 segment inwards and close the pore. Changes in the position and orientation of S4 are then transmitted to the activation gate formed by the inner helix bundle via the S4-S5 linker region.</text>
</comment>
<comment type="domain">
    <text evidence="2 27 29 30 31 34">The N-terminal cytoplasmic region can mediate N-type inactivation by physically blocking the channel (PubMed:14695263). This probably does not happen in vivo, where the N-terminal region mediates interaction with regulatory subunits, such as KCNIP1 and KCNIP2 (PubMed:15358149). The zinc binding sites in the N-terminal domain are important for tetramerization and assembly of a functional channel complex (By similarity). The channel undergoes closed-state inactivation, where conformation changes lead to inactivation through an intermediate state involving breakdown of its 4-fold symmetry. that governs the distinct transient, fast-inactivating currents (Probable) (PubMed:35597238).</text>
</comment>
<comment type="domain">
    <text evidence="2 21">The C-terminal cytoplasmic region is important for normal expression at the cell membrane and modulates the voltage-dependence of channel activation and inactivation (PubMed:16934482). It is required for interaction with KCNIP2, and probably other family members as well (By similarity).</text>
</comment>
<comment type="PTM">
    <text evidence="2 3">Phosphorylation at Ser-438 in response to MAPK activation is increased in stimulated dendrites. Interaction with KCNIP2 and DPP6 propomtes phosphorylation by PKA at Ser-552. Phosphorylation at Ser-552 has no effect on interaction with KCNIP3, but is required for the regulation of channel activity by KCNIP3. Phosphorylation at Ser-552 leads to KCND2 internalization (By similarity). Phosphorylated by MAPK in response to signaling via the metabotropic glutamate receptor GRM5 (By similarity). Phosphorylation at Ser-616 is required for the down-regulation of neuronal A-type currents in response to signaling via GRM5 (By similarity).</text>
</comment>
<comment type="disease">
    <text evidence="24">KNCD2 mutations have been found in a family with autism and epilepsy and may play a role in disease pathogenesis. Autism is a complex multifactorial, pervasive developmental disorder characterized by impairments in reciprocal social interaction and communication, restricted and stereotyped patterns of interests and activities, and the presence of developmental abnormalities by 3 years of age. Epilepsy is characterized by paroxysmal transient disturbances of the electrical activity of the brain that may be manifested as episodic impairment or loss of consciousness, abnormal motor phenomena, psychic or sensory disturbances, or perturbation of the autonomic nervous system.</text>
</comment>
<comment type="disease">
    <text evidence="21">A KCND2 mutation leading to the production of a C-terminally truncated protein has been identified in a patient with epilepsy. Epilepsy is characterized by paroxysmal transient disturbances of the electrical activity of the brain that may be manifested as episodic impairment or loss of consciousness, abnormal motor phenomena, psychic or sensory disturbances, or perturbation of the autonomic nervous system.</text>
</comment>
<comment type="miscellaneous">
    <text evidence="5 33 34">The transient neuronal A-type potassium current called I(SA) is triggered at membrane potentials that are below the threshold for action potentials. It inactivates rapidly and recovers rapidly from inactivation. It regulates the firing of action potentials and plays a role in synaptic integration and plasticity. Potassium channels containing KCND2 account for about 80% of the neuronal A-type potassium current. In contrast, the potassium channel responsible for the cardiac I(to) current differs between species; it is mediated by KCND2 in rodents. In human and other non-rodents KCND3 may play an equivalent role.</text>
</comment>
<comment type="miscellaneous">
    <text evidence="2">Is specifically and reversibly inhibited by the scorpion toxin Ts8 (AC P69940).</text>
</comment>
<comment type="similarity">
    <text evidence="28">Belongs to the potassium channel family. D (Shal) (TC 1.A.1.2) subfamily. Kv4.2/KCND2 sub-subfamily.</text>
</comment>
<comment type="sequence caution" evidence="28">
    <conflict type="erroneous initiation">
        <sequence resource="EMBL-CDS" id="BAA82996"/>
    </conflict>
    <text>Extended N-terminus.</text>
</comment>
<gene>
    <name evidence="37" type="primary">KCND2</name>
    <name type="synonym">KIAA1044</name>
</gene>
<organism>
    <name type="scientific">Homo sapiens</name>
    <name type="common">Human</name>
    <dbReference type="NCBI Taxonomy" id="9606"/>
    <lineage>
        <taxon>Eukaryota</taxon>
        <taxon>Metazoa</taxon>
        <taxon>Chordata</taxon>
        <taxon>Craniata</taxon>
        <taxon>Vertebrata</taxon>
        <taxon>Euteleostomi</taxon>
        <taxon>Mammalia</taxon>
        <taxon>Eutheria</taxon>
        <taxon>Euarchontoglires</taxon>
        <taxon>Primates</taxon>
        <taxon>Haplorrhini</taxon>
        <taxon>Catarrhini</taxon>
        <taxon>Hominidae</taxon>
        <taxon>Homo</taxon>
    </lineage>
</organism>
<feature type="chain" id="PRO_0000054064" description="A-type voltage-gated potassium channel KCND2">
    <location>
        <begin position="1"/>
        <end position="630"/>
    </location>
</feature>
<feature type="topological domain" description="Cytoplasmic" evidence="36">
    <location>
        <begin position="1"/>
        <end position="184"/>
    </location>
</feature>
<feature type="transmembrane region" description="Helical; Name=Segment S1" evidence="26 45">
    <location>
        <begin position="185"/>
        <end position="206"/>
    </location>
</feature>
<feature type="topological domain" description="Extracellular" evidence="36">
    <location>
        <begin position="207"/>
        <end position="226"/>
    </location>
</feature>
<feature type="transmembrane region" description="Helical; Name=Segment S2" evidence="26 45">
    <location>
        <begin position="227"/>
        <end position="249"/>
    </location>
</feature>
<feature type="topological domain" description="Cytoplasmic" evidence="36">
    <location>
        <begin position="250"/>
        <end position="256"/>
    </location>
</feature>
<feature type="transmembrane region" description="Helical; Name=Segment S3" evidence="26 45">
    <location>
        <begin position="257"/>
        <end position="281"/>
    </location>
</feature>
<feature type="topological domain" description="Extracellular" evidence="36">
    <location>
        <begin position="282"/>
        <end position="287"/>
    </location>
</feature>
<feature type="transmembrane region" description="Helical; Voltage-sensor; Name=Segment S4" evidence="26 45">
    <location>
        <begin position="288"/>
        <end position="307"/>
    </location>
</feature>
<feature type="topological domain" description="Cytoplasmic" evidence="36">
    <location>
        <begin position="308"/>
        <end position="321"/>
    </location>
</feature>
<feature type="transmembrane region" description="Helical; Name=Segment S5" evidence="26 45">
    <location>
        <begin position="322"/>
        <end position="345"/>
    </location>
</feature>
<feature type="topological domain" description="Extracellular" evidence="36">
    <location>
        <begin position="346"/>
        <end position="357"/>
    </location>
</feature>
<feature type="intramembrane region" description="Helical; Name=Pore helix" evidence="1">
    <location>
        <begin position="358"/>
        <end position="369"/>
    </location>
</feature>
<feature type="intramembrane region" evidence="1">
    <location>
        <begin position="370"/>
        <end position="377"/>
    </location>
</feature>
<feature type="topological domain" description="Extracellular" evidence="36">
    <location>
        <begin position="378"/>
        <end position="380"/>
    </location>
</feature>
<feature type="transmembrane region" description="Helical; Name=Segment S6" evidence="26 45">
    <location>
        <begin position="381"/>
        <end position="403"/>
    </location>
</feature>
<feature type="topological domain" description="Cytoplasmic" evidence="36">
    <location>
        <begin position="404"/>
        <end position="630"/>
    </location>
</feature>
<feature type="region of interest" description="Interaction with KCNIP1, KCNIP2, and other family members" evidence="2">
    <location>
        <begin position="2"/>
        <end position="20"/>
    </location>
</feature>
<feature type="region of interest" description="Interaction with KCNIP1" evidence="2">
    <location>
        <begin position="71"/>
        <end position="90"/>
    </location>
</feature>
<feature type="region of interest" description="S4-S5 linker" evidence="1">
    <location>
        <begin position="308"/>
        <end position="321"/>
    </location>
</feature>
<feature type="region of interest" description="Important for normal channel activation and inactivation, for interaction with KCNIP2, and probably other family members as well" evidence="2 32">
    <location>
        <begin position="474"/>
        <end position="630"/>
    </location>
</feature>
<feature type="region of interest" description="Required for dendritic targeting" evidence="2">
    <location>
        <begin position="474"/>
        <end position="489"/>
    </location>
</feature>
<feature type="region of interest" description="Disordered" evidence="4">
    <location>
        <begin position="600"/>
        <end position="630"/>
    </location>
</feature>
<feature type="short sequence motif" description="Selectivity filter" evidence="1">
    <location>
        <begin position="370"/>
        <end position="375"/>
    </location>
</feature>
<feature type="short sequence motif" description="PDZ-binding" evidence="2">
    <location>
        <begin position="627"/>
        <end position="630"/>
    </location>
</feature>
<feature type="binding site" description="in chain A" evidence="26 45">
    <location>
        <position position="105"/>
    </location>
    <ligand>
        <name>Zn(2+)</name>
        <dbReference type="ChEBI" id="CHEBI:29105"/>
        <note>ligand shared between homotetrameric partners</note>
    </ligand>
</feature>
<feature type="binding site" description="in chain B" evidence="26 45">
    <location>
        <position position="111"/>
    </location>
    <ligand>
        <name>Zn(2+)</name>
        <dbReference type="ChEBI" id="CHEBI:29105"/>
        <note>ligand shared between homotetrameric partners</note>
    </ligand>
</feature>
<feature type="binding site" description="in chain A" evidence="26 45">
    <location>
        <position position="132"/>
    </location>
    <ligand>
        <name>Zn(2+)</name>
        <dbReference type="ChEBI" id="CHEBI:29105"/>
        <note>ligand shared between homotetrameric partners</note>
    </ligand>
</feature>
<feature type="binding site" description="in chain A" evidence="26 45">
    <location>
        <position position="133"/>
    </location>
    <ligand>
        <name>Zn(2+)</name>
        <dbReference type="ChEBI" id="CHEBI:29105"/>
        <note>ligand shared between homotetrameric partners</note>
    </ligand>
</feature>
<feature type="binding site" evidence="27 47 49 50 51">
    <location>
        <position position="370"/>
    </location>
    <ligand>
        <name>K(+)</name>
        <dbReference type="ChEBI" id="CHEBI:29103"/>
        <note>ligand shared between homotetrameric partners</note>
    </ligand>
</feature>
<feature type="binding site" evidence="27 48 52">
    <location>
        <position position="371"/>
    </location>
    <ligand>
        <name>K(+)</name>
        <dbReference type="ChEBI" id="CHEBI:29103"/>
        <note>ligand shared between homotetrameric partners</note>
    </ligand>
</feature>
<feature type="binding site" evidence="27 47 48 49 50 51 52">
    <location>
        <position position="372"/>
    </location>
    <ligand>
        <name>K(+)</name>
        <dbReference type="ChEBI" id="CHEBI:29103"/>
        <note>ligand shared between homotetrameric partners</note>
    </ligand>
</feature>
<feature type="binding site" evidence="27 47 49 50 51">
    <location>
        <position position="373"/>
    </location>
    <ligand>
        <name>K(+)</name>
        <dbReference type="ChEBI" id="CHEBI:29103"/>
        <note>ligand shared between homotetrameric partners</note>
    </ligand>
</feature>
<feature type="modified residue" description="Phosphothreonine" evidence="2">
    <location>
        <position position="38"/>
    </location>
</feature>
<feature type="modified residue" description="Phosphoserine" evidence="2">
    <location>
        <position position="438"/>
    </location>
</feature>
<feature type="modified residue" description="Phosphoserine" evidence="2">
    <location>
        <position position="548"/>
    </location>
</feature>
<feature type="modified residue" description="Phosphoserine" evidence="3">
    <location>
        <position position="552"/>
    </location>
</feature>
<feature type="modified residue" description="Phosphoserine" evidence="3">
    <location>
        <position position="572"/>
    </location>
</feature>
<feature type="modified residue" description="Phosphoserine" evidence="3">
    <location>
        <position position="575"/>
    </location>
</feature>
<feature type="modified residue" description="Phosphothreonine" evidence="2">
    <location>
        <position position="602"/>
    </location>
</feature>
<feature type="modified residue" description="Phosphothreonine" evidence="2">
    <location>
        <position position="607"/>
    </location>
</feature>
<feature type="modified residue" description="Phosphoserine" evidence="3">
    <location>
        <position position="616"/>
    </location>
</feature>
<feature type="sequence variant" id="VAR_072076" description="Found in a family with atypical autism and severe epilepsy; likely pathogenic; disrupts potassium current inactivation; dbSNP:rs587777631." evidence="24">
    <original>V</original>
    <variation>M</variation>
    <location>
        <position position="404"/>
    </location>
</feature>
<feature type="mutagenesis site" description="Increases peak current amplitude and causes a negative shift in the voltage-dependence of activation." evidence="22">
    <original>G</original>
    <variation>A</variation>
    <location>
        <position position="309"/>
    </location>
</feature>
<feature type="mutagenesis site" description="No effect on peak current amplitude, but causes a positive shift in the voltage-dependence of activation. May increase the affinity for the closed-inactivated state of the channel." evidence="22">
    <original>R</original>
    <variation>A</variation>
    <location>
        <position position="311"/>
    </location>
</feature>
<feature type="mutagenesis site" description="Increases peak current amplitude and causes a positive shift in the voltage-dependence of activation." evidence="22">
    <original>I</original>
    <variation>A</variation>
    <location>
        <position position="312"/>
    </location>
</feature>
<feature type="mutagenesis site" description="Causes a positive shift in the voltage-dependence of activation. May decrease the affinity for the closed-inactivated state of the channel." evidence="22">
    <original>L</original>
    <variation>A</variation>
    <location>
        <position position="313"/>
    </location>
</feature>
<feature type="mutagenesis site" description="Loss of channel activity." evidence="22">
    <original>G</original>
    <variation>A</variation>
    <location>
        <position position="314"/>
    </location>
</feature>
<feature type="mutagenesis site" description="Increases peak current amplitude but has a minor effect on the voltage-dependence of activation." evidence="22">
    <original>Y</original>
    <variation>A</variation>
    <location>
        <position position="315"/>
    </location>
</feature>
<feature type="mutagenesis site" description="Increases peak current amplitude and causes a positive shift in the voltage-dependence of activation." evidence="22">
    <original>T</original>
    <variation>A</variation>
    <location>
        <position position="316"/>
    </location>
</feature>
<feature type="mutagenesis site" description="Increases peak current amplitude and causes a positive shift in the voltage-dependence of activation." evidence="22">
    <original>L</original>
    <variation>A</variation>
    <location>
        <position position="317"/>
    </location>
</feature>
<feature type="mutagenesis site" description="Increases peak current amplitude and causes a positive shift in the voltage-dependence of activation." evidence="22">
    <original>K</original>
    <variation>A</variation>
    <location>
        <position position="318"/>
    </location>
</feature>
<feature type="mutagenesis site" description="May impair protein folding." evidence="22">
    <original>S</original>
    <variation>A</variation>
    <location>
        <position position="319"/>
    </location>
</feature>
<feature type="mutagenesis site" description="Increases peak current amplitude and causes a positive shift in the voltage-dependence of activation." evidence="22">
    <original>C</original>
    <variation>A</variation>
    <location>
        <position position="320"/>
    </location>
</feature>
<feature type="mutagenesis site" description="Increases peak current amplitude and slows the onset of inactivation at low voltage, but has no effect on the voltage-dependence of activation." evidence="22">
    <original>C</original>
    <variation>S</variation>
    <location>
        <position position="320"/>
    </location>
</feature>
<feature type="mutagenesis site" description="Increases peak current amplitude and causes a positive shift in the voltage-dependence of activation. May increase the affinity for the closed-inactivated state of the channel." evidence="22">
    <original>S</original>
    <variation>A</variation>
    <location>
        <position position="322"/>
    </location>
</feature>
<feature type="mutagenesis site" description="Slightly increases peak current amplitude and causes a negative shift in the voltage-dependence of activation. May decrease the affinity for the closed-inactivated state of the channel." evidence="22">
    <original>E</original>
    <variation>A</variation>
    <location>
        <position position="323"/>
    </location>
</feature>
<feature type="mutagenesis site" description="May impair protein folding." evidence="22">
    <original>L</original>
    <variation>A</variation>
    <location>
        <position position="324"/>
    </location>
</feature>
<feature type="mutagenesis site" description="Loss of channel activity." evidence="22">
    <original>L</original>
    <variation>A</variation>
    <location>
        <position position="327"/>
    </location>
</feature>
<feature type="mutagenesis site" description="May impair protein folding." evidence="22">
    <original>L</original>
    <variation>A</variation>
    <location>
        <position position="328"/>
    </location>
</feature>
<feature type="mutagenesis site" description="Loss of channel activity." evidence="22">
    <original>F</original>
    <variation>A</variation>
    <location>
        <position position="329"/>
    </location>
</feature>
<feature type="mutagenesis site" description="May impair protein folding." evidence="22">
    <original>V</original>
    <variation>A</variation>
    <location>
        <position position="397"/>
    </location>
</feature>
<feature type="mutagenesis site" description="Loss of channel activity." evidence="22">
    <original>I</original>
    <variation>A</variation>
    <location>
        <position position="398"/>
    </location>
</feature>
<feature type="mutagenesis site" description="May impair protein folding." evidence="22">
    <original>A</original>
    <variation>V</variation>
    <location>
        <position position="399"/>
    </location>
</feature>
<feature type="mutagenesis site" description="May impair protein folding." evidence="22">
    <original>P</original>
    <variation>A</variation>
    <location>
        <position position="401"/>
    </location>
</feature>
<feature type="mutagenesis site" description="Increases pak current amplitude and causes a positive shift in the voltage-dependence of activation and steady-state inactivation. May increase the affinity for the closed-inactivated state of the channel." evidence="22">
    <original>VPV</original>
    <variation>IPI</variation>
    <location>
        <begin position="402"/>
        <end position="404"/>
    </location>
</feature>
<feature type="mutagenesis site" description="Loss of channel activity." evidence="22">
    <original>P</original>
    <variation>A</variation>
    <location>
        <position position="403"/>
    </location>
</feature>
<feature type="mutagenesis site" description="Loss of channel activity." evidence="22">
    <original>I</original>
    <variation>A</variation>
    <location>
        <position position="405"/>
    </location>
</feature>
<feature type="mutagenesis site" description="Loss of channel activity." evidence="22">
    <original>V</original>
    <variation>A</variation>
    <location>
        <position position="406"/>
    </location>
</feature>
<feature type="mutagenesis site" description="Increases peak current amplitude but has no effect on the voltage-dependence of activation. May increase the affinity for the closed-inactivated state of the channel." evidence="22">
    <original>S</original>
    <variation>A</variation>
    <location>
        <position position="407"/>
    </location>
</feature>
<feature type="mutagenesis site" description="Decreases peak current amplitude and causes a positive shift in the voltage-dependence of activation. May increase the affinity for the closed-inactivated state of the channel." evidence="22">
    <original>N</original>
    <variation>A</variation>
    <location>
        <position position="408"/>
    </location>
</feature>
<feature type="mutagenesis site" description="May impair protein folding." evidence="22">
    <original>F</original>
    <variation>A</variation>
    <location>
        <position position="409"/>
    </location>
</feature>
<feature type="mutagenesis site" description="Abolishes interaction with FLNC." evidence="8">
    <original>PTPP</original>
    <variation>ATAA</variation>
    <location>
        <begin position="601"/>
        <end position="604"/>
    </location>
</feature>
<feature type="sequence conflict" description="In Ref. 1; AAD22053." evidence="28" ref="1">
    <original>N</original>
    <variation>S</variation>
    <location>
        <position position="450"/>
    </location>
</feature>
<feature type="sequence conflict" description="In Ref. 1; AAD22053." evidence="28" ref="1">
    <original>Q</original>
    <variation>P</variation>
    <location>
        <position position="464"/>
    </location>
</feature>
<feature type="sequence conflict" description="In Ref. 1; AAD22053." evidence="28" ref="1">
    <original>Q</original>
    <variation>R</variation>
    <location>
        <position position="550"/>
    </location>
</feature>
<feature type="sequence conflict" description="In Ref. 1; AAD22053." evidence="28" ref="1">
    <original>I</original>
    <variation>V</variation>
    <location>
        <position position="553"/>
    </location>
</feature>
<feature type="helix" evidence="56">
    <location>
        <begin position="9"/>
        <end position="15"/>
    </location>
</feature>
<feature type="helix" evidence="56">
    <location>
        <begin position="16"/>
        <end position="18"/>
    </location>
</feature>
<feature type="turn" evidence="56">
    <location>
        <begin position="19"/>
        <end position="22"/>
    </location>
</feature>
<feature type="helix" evidence="56">
    <location>
        <begin position="36"/>
        <end position="38"/>
    </location>
</feature>
<feature type="strand" evidence="56">
    <location>
        <begin position="43"/>
        <end position="47"/>
    </location>
</feature>
<feature type="strand" evidence="56">
    <location>
        <begin position="50"/>
        <end position="54"/>
    </location>
</feature>
<feature type="helix" evidence="56">
    <location>
        <begin position="56"/>
        <end position="60"/>
    </location>
</feature>
<feature type="turn" evidence="56">
    <location>
        <begin position="66"/>
        <end position="68"/>
    </location>
</feature>
<feature type="helix" evidence="56">
    <location>
        <begin position="70"/>
        <end position="75"/>
    </location>
</feature>
<feature type="turn" evidence="56">
    <location>
        <begin position="78"/>
        <end position="81"/>
    </location>
</feature>
<feature type="strand" evidence="56">
    <location>
        <begin position="82"/>
        <end position="85"/>
    </location>
</feature>
<feature type="helix" evidence="56">
    <location>
        <begin position="89"/>
        <end position="101"/>
    </location>
</feature>
<feature type="strand" evidence="54">
    <location>
        <begin position="108"/>
        <end position="110"/>
    </location>
</feature>
<feature type="helix" evidence="56">
    <location>
        <begin position="112"/>
        <end position="121"/>
    </location>
</feature>
<feature type="helix" evidence="56">
    <location>
        <begin position="126"/>
        <end position="128"/>
    </location>
</feature>
<feature type="helix" evidence="56">
    <location>
        <begin position="131"/>
        <end position="152"/>
    </location>
</feature>
<feature type="helix" evidence="54">
    <location>
        <begin position="155"/>
        <end position="157"/>
    </location>
</feature>
<feature type="helix" evidence="55">
    <location>
        <begin position="167"/>
        <end position="176"/>
    </location>
</feature>
<feature type="turn" evidence="55">
    <location>
        <begin position="178"/>
        <end position="180"/>
    </location>
</feature>
<feature type="helix" evidence="55">
    <location>
        <begin position="182"/>
        <end position="204"/>
    </location>
</feature>
<feature type="strand" evidence="55">
    <location>
        <begin position="207"/>
        <end position="211"/>
    </location>
</feature>
<feature type="strand" evidence="55">
    <location>
        <begin position="216"/>
        <end position="220"/>
    </location>
</feature>
<feature type="helix" evidence="55">
    <location>
        <begin position="221"/>
        <end position="224"/>
    </location>
</feature>
<feature type="helix" evidence="55">
    <location>
        <begin position="226"/>
        <end position="249"/>
    </location>
</feature>
<feature type="helix" evidence="55">
    <location>
        <begin position="254"/>
        <end position="258"/>
    </location>
</feature>
<feature type="helix" evidence="55">
    <location>
        <begin position="261"/>
        <end position="278"/>
    </location>
</feature>
<feature type="helix" evidence="55">
    <location>
        <begin position="280"/>
        <end position="282"/>
    </location>
</feature>
<feature type="strand" evidence="55">
    <location>
        <begin position="283"/>
        <end position="285"/>
    </location>
</feature>
<feature type="helix" evidence="55">
    <location>
        <begin position="288"/>
        <end position="295"/>
    </location>
</feature>
<feature type="helix" evidence="55">
    <location>
        <begin position="296"/>
        <end position="305"/>
    </location>
</feature>
<feature type="helix" evidence="55">
    <location>
        <begin position="308"/>
        <end position="319"/>
    </location>
</feature>
<feature type="helix" evidence="55">
    <location>
        <begin position="321"/>
        <end position="346"/>
    </location>
</feature>
<feature type="strand" evidence="54">
    <location>
        <begin position="349"/>
        <end position="351"/>
    </location>
</feature>
<feature type="helix" evidence="55">
    <location>
        <begin position="357"/>
        <end position="368"/>
    </location>
</feature>
<feature type="strand" evidence="55">
    <location>
        <begin position="374"/>
        <end position="376"/>
    </location>
</feature>
<feature type="helix" evidence="55">
    <location>
        <begin position="381"/>
        <end position="399"/>
    </location>
</feature>
<feature type="helix" evidence="55">
    <location>
        <begin position="402"/>
        <end position="423"/>
    </location>
</feature>
<feature type="helix" evidence="56">
    <location>
        <begin position="426"/>
        <end position="450"/>
    </location>
</feature>
<feature type="helix" evidence="56">
    <location>
        <begin position="473"/>
        <end position="489"/>
    </location>
</feature>
<keyword id="KW-0002">3D-structure</keyword>
<keyword id="KW-1269">Autism</keyword>
<keyword id="KW-1268">Autism spectrum disorder</keyword>
<keyword id="KW-0965">Cell junction</keyword>
<keyword id="KW-1003">Cell membrane</keyword>
<keyword id="KW-0966">Cell projection</keyword>
<keyword id="KW-0225">Disease variant</keyword>
<keyword id="KW-0887">Epilepsy</keyword>
<keyword id="KW-0407">Ion channel</keyword>
<keyword id="KW-0406">Ion transport</keyword>
<keyword id="KW-0472">Membrane</keyword>
<keyword id="KW-0479">Metal-binding</keyword>
<keyword id="KW-0597">Phosphoprotein</keyword>
<keyword id="KW-0628">Postsynaptic cell membrane</keyword>
<keyword id="KW-0630">Potassium</keyword>
<keyword id="KW-0631">Potassium channel</keyword>
<keyword id="KW-0633">Potassium transport</keyword>
<keyword id="KW-1267">Proteomics identification</keyword>
<keyword id="KW-1185">Reference proteome</keyword>
<keyword id="KW-0770">Synapse</keyword>
<keyword id="KW-0812">Transmembrane</keyword>
<keyword id="KW-1133">Transmembrane helix</keyword>
<keyword id="KW-0813">Transport</keyword>
<keyword id="KW-0851">Voltage-gated channel</keyword>
<keyword id="KW-0862">Zinc</keyword>
<protein>
    <recommendedName>
        <fullName evidence="28">A-type voltage-gated potassium channel KCND2</fullName>
    </recommendedName>
    <alternativeName>
        <fullName>Potassium voltage-gated channel subfamily D member 2</fullName>
    </alternativeName>
    <alternativeName>
        <fullName evidence="2">Voltage-gated potassium channel subunit Kv4.2</fullName>
    </alternativeName>
</protein>
<proteinExistence type="evidence at protein level"/>
<sequence>MAAGVAAWLPFARAAAIGWMPVASGPMPAPPRQERKRTQDALIVLNVSGTRFQTWQDTLERYPDTLLGSSERDFFYHPETQQYFFDRDPDIFRHILNFYRTGKLHYPRHECISAYDEELAFFGLIPEIIGDCCYEEYKDRRRENAERLQDDADTDTAGESALPTMTARQRVWRAFENPHTSTMALVFYYVTGFFIAVSVIANVVETVPCGSSPGHIKELPCGERYAVAFFCLDTACVMIFTVEYLLRLAAAPSRYRFVRSVMSIIDVVAILPYYIGLVMTDNEDVSGAFVTLRVFRVFRIFKFSRHSQGLRILGYTLKSCASELGFLLFSLTMAIIIFATVMFYAEKGSSASKFTSIPAAFWYTIVTMTTLGYGDMVPKTIAGKIFGSICSLSGVLVIALPVPVIVSNFSRIYHQNQRADKRRAQKKARLARIRAAKSGSANAYMQSKRNGLLSNQLQSSEDEQAFVSKSGSSFETQHHHLLHCLEKTTNHEFVDEQVFEESCMEVATVNRPSSHSPSLSSQQGVTSTCCSRRHKKTFRIPNANVSGSHQGSIQELSTIQIRCVERTPLSNSRSSLNAKMEECVKLNCEQPYVTTAIISIPTPPVTTPEGDDRPESPEYSGGNIVRVSAL</sequence>
<dbReference type="EMBL" id="AF121104">
    <property type="protein sequence ID" value="AAD22053.1"/>
    <property type="molecule type" value="mRNA"/>
</dbReference>
<dbReference type="EMBL" id="AB028967">
    <property type="protein sequence ID" value="BAA82996.2"/>
    <property type="status" value="ALT_INIT"/>
    <property type="molecule type" value="mRNA"/>
</dbReference>
<dbReference type="EMBL" id="AJ010969">
    <property type="protein sequence ID" value="CAB56841.1"/>
    <property type="molecule type" value="mRNA"/>
</dbReference>
<dbReference type="EMBL" id="AF166008">
    <property type="protein sequence ID" value="AAF65618.1"/>
    <property type="molecule type" value="Genomic_DNA"/>
</dbReference>
<dbReference type="EMBL" id="AF166007">
    <property type="protein sequence ID" value="AAF65618.1"/>
    <property type="status" value="JOINED"/>
    <property type="molecule type" value="Genomic_DNA"/>
</dbReference>
<dbReference type="EMBL" id="AC004888">
    <property type="protein sequence ID" value="AAC83405.1"/>
    <property type="molecule type" value="Genomic_DNA"/>
</dbReference>
<dbReference type="EMBL" id="AC004946">
    <property type="status" value="NOT_ANNOTATED_CDS"/>
    <property type="molecule type" value="Genomic_DNA"/>
</dbReference>
<dbReference type="EMBL" id="AF142568">
    <property type="protein sequence ID" value="AAD52159.1"/>
    <property type="molecule type" value="Genomic_DNA"/>
</dbReference>
<dbReference type="EMBL" id="BC110449">
    <property type="protein sequence ID" value="AAI10450.1"/>
    <property type="molecule type" value="mRNA"/>
</dbReference>
<dbReference type="EMBL" id="BC110450">
    <property type="protein sequence ID" value="AAI10451.1"/>
    <property type="molecule type" value="mRNA"/>
</dbReference>
<dbReference type="CCDS" id="CCDS5776.1"/>
<dbReference type="RefSeq" id="NP_036413.1">
    <property type="nucleotide sequence ID" value="NM_012281.3"/>
</dbReference>
<dbReference type="RefSeq" id="XP_047276302.1">
    <property type="nucleotide sequence ID" value="XM_047420346.1"/>
</dbReference>
<dbReference type="RefSeq" id="XP_054214141.1">
    <property type="nucleotide sequence ID" value="XM_054358166.1"/>
</dbReference>
<dbReference type="PDB" id="7E7Z">
    <property type="method" value="EM"/>
    <property type="resolution" value="3.20 A"/>
    <property type="chains" value="A/B/C/D=163-417"/>
</dbReference>
<dbReference type="PDB" id="7E83">
    <property type="method" value="EM"/>
    <property type="resolution" value="3.10 A"/>
    <property type="chains" value="A/C/D/G=2-495"/>
</dbReference>
<dbReference type="PDB" id="7E84">
    <property type="method" value="EM"/>
    <property type="resolution" value="3.10 A"/>
    <property type="chains" value="A/B/D/G=2-495"/>
</dbReference>
<dbReference type="PDB" id="7E87">
    <property type="method" value="EM"/>
    <property type="resolution" value="3.40 A"/>
    <property type="chains" value="A/D=40-436, B/C=40-437"/>
</dbReference>
<dbReference type="PDB" id="7E8B">
    <property type="method" value="EM"/>
    <property type="resolution" value="4.20 A"/>
    <property type="chains" value="A/C=40-436, B/D=40-437"/>
</dbReference>
<dbReference type="PDB" id="7E8E">
    <property type="method" value="EM"/>
    <property type="resolution" value="3.90 A"/>
    <property type="chains" value="A/B/C/D=2-495"/>
</dbReference>
<dbReference type="PDB" id="7E8H">
    <property type="method" value="EM"/>
    <property type="resolution" value="4.50 A"/>
    <property type="chains" value="A/B/C/D=2-495"/>
</dbReference>
<dbReference type="PDB" id="7F0J">
    <property type="method" value="EM"/>
    <property type="resolution" value="2.90 A"/>
    <property type="chains" value="B/C/F/H=1-630"/>
</dbReference>
<dbReference type="PDB" id="7F3F">
    <property type="method" value="EM"/>
    <property type="resolution" value="3.10 A"/>
    <property type="chains" value="A/B/D/G=1-630"/>
</dbReference>
<dbReference type="PDB" id="7UK5">
    <property type="method" value="EM"/>
    <property type="resolution" value="2.76 A"/>
    <property type="chains" value="A/B/C/D=1-630"/>
</dbReference>
<dbReference type="PDB" id="7UKC">
    <property type="method" value="EM"/>
    <property type="resolution" value="3.00 A"/>
    <property type="chains" value="A/B/C/D=1-524"/>
</dbReference>
<dbReference type="PDB" id="7UKD">
    <property type="method" value="EM"/>
    <property type="resolution" value="2.88 A"/>
    <property type="chains" value="A/B/C/D=1-524"/>
</dbReference>
<dbReference type="PDB" id="7UKE">
    <property type="method" value="EM"/>
    <property type="resolution" value="3.01 A"/>
    <property type="chains" value="A/B/C/D=1-524"/>
</dbReference>
<dbReference type="PDB" id="7UKF">
    <property type="method" value="EM"/>
    <property type="resolution" value="3.02 A"/>
    <property type="chains" value="A/B/C/D=1-524"/>
</dbReference>
<dbReference type="PDB" id="7UKG">
    <property type="method" value="EM"/>
    <property type="resolution" value="2.24 A"/>
    <property type="chains" value="A/B/C/D=1-524"/>
</dbReference>
<dbReference type="PDB" id="7UKH">
    <property type="method" value="EM"/>
    <property type="resolution" value="2.33 A"/>
    <property type="chains" value="A/B/C/D=1-524"/>
</dbReference>
<dbReference type="PDBsum" id="7E7Z"/>
<dbReference type="PDBsum" id="7E83"/>
<dbReference type="PDBsum" id="7E84"/>
<dbReference type="PDBsum" id="7E87"/>
<dbReference type="PDBsum" id="7E8B"/>
<dbReference type="PDBsum" id="7E8E"/>
<dbReference type="PDBsum" id="7E8H"/>
<dbReference type="PDBsum" id="7F0J"/>
<dbReference type="PDBsum" id="7F3F"/>
<dbReference type="PDBsum" id="7UK5"/>
<dbReference type="PDBsum" id="7UKC"/>
<dbReference type="PDBsum" id="7UKD"/>
<dbReference type="PDBsum" id="7UKE"/>
<dbReference type="PDBsum" id="7UKF"/>
<dbReference type="PDBsum" id="7UKG"/>
<dbReference type="PDBsum" id="7UKH"/>
<dbReference type="EMDB" id="EMD-26575"/>
<dbReference type="EMDB" id="EMD-26576"/>
<dbReference type="EMDB" id="EMD-26577"/>
<dbReference type="EMDB" id="EMD-26578"/>
<dbReference type="EMDB" id="EMD-26579"/>
<dbReference type="EMDB" id="EMD-26580"/>
<dbReference type="EMDB" id="EMD-26581"/>
<dbReference type="EMDB" id="EMD-31005"/>
<dbReference type="EMDB" id="EMD-31009"/>
<dbReference type="EMDB" id="EMD-31011"/>
<dbReference type="EMDB" id="EMD-31013"/>
<dbReference type="EMDB" id="EMD-31016"/>
<dbReference type="EMDB" id="EMD-31019"/>
<dbReference type="EMDB" id="EMD-31399"/>
<dbReference type="EMDB" id="EMD-31433"/>
<dbReference type="SMR" id="Q9NZV8"/>
<dbReference type="BioGRID" id="109953">
    <property type="interactions" value="20"/>
</dbReference>
<dbReference type="ComplexPortal" id="CPX-3239">
    <property type="entry name" value="Kv4.2-KChIP2 channel complex"/>
</dbReference>
<dbReference type="CORUM" id="Q9NZV8"/>
<dbReference type="FunCoup" id="Q9NZV8">
    <property type="interactions" value="340"/>
</dbReference>
<dbReference type="IntAct" id="Q9NZV8">
    <property type="interactions" value="10"/>
</dbReference>
<dbReference type="STRING" id="9606.ENSP00000333496"/>
<dbReference type="ChEMBL" id="CHEMBL5885"/>
<dbReference type="DrugBank" id="DB06637">
    <property type="generic name" value="Dalfampridine"/>
</dbReference>
<dbReference type="DrugBank" id="DB00280">
    <property type="generic name" value="Disopyramide"/>
</dbReference>
<dbReference type="DrugBank" id="DB00228">
    <property type="generic name" value="Enflurane"/>
</dbReference>
<dbReference type="DrugBank" id="DB00458">
    <property type="generic name" value="Imipramine"/>
</dbReference>
<dbReference type="DrugBank" id="DB01110">
    <property type="generic name" value="Miconazole"/>
</dbReference>
<dbReference type="DrugBank" id="DB01069">
    <property type="generic name" value="Promethazine"/>
</dbReference>
<dbReference type="DrugCentral" id="Q9NZV8"/>
<dbReference type="TCDB" id="1.A.1.2.5">
    <property type="family name" value="the voltage-gated ion channel (vic) superfamily"/>
</dbReference>
<dbReference type="iPTMnet" id="Q9NZV8"/>
<dbReference type="PhosphoSitePlus" id="Q9NZV8"/>
<dbReference type="BioMuta" id="KCND2"/>
<dbReference type="DMDM" id="38258257"/>
<dbReference type="MassIVE" id="Q9NZV8"/>
<dbReference type="PaxDb" id="9606-ENSP00000333496"/>
<dbReference type="PeptideAtlas" id="Q9NZV8"/>
<dbReference type="ProteomicsDB" id="83521"/>
<dbReference type="ABCD" id="Q9NZV8">
    <property type="antibodies" value="1 sequenced antibody"/>
</dbReference>
<dbReference type="Antibodypedia" id="31683">
    <property type="antibodies" value="426 antibodies from 39 providers"/>
</dbReference>
<dbReference type="DNASU" id="3751"/>
<dbReference type="Ensembl" id="ENST00000331113.9">
    <property type="protein sequence ID" value="ENSP00000333496.4"/>
    <property type="gene ID" value="ENSG00000184408.10"/>
</dbReference>
<dbReference type="GeneID" id="3751"/>
<dbReference type="KEGG" id="hsa:3751"/>
<dbReference type="MANE-Select" id="ENST00000331113.9">
    <property type="protein sequence ID" value="ENSP00000333496.4"/>
    <property type="RefSeq nucleotide sequence ID" value="NM_012281.3"/>
    <property type="RefSeq protein sequence ID" value="NP_036413.1"/>
</dbReference>
<dbReference type="UCSC" id="uc003vjj.2">
    <property type="organism name" value="human"/>
</dbReference>
<dbReference type="AGR" id="HGNC:6238"/>
<dbReference type="CTD" id="3751"/>
<dbReference type="DisGeNET" id="3751"/>
<dbReference type="GeneCards" id="KCND2"/>
<dbReference type="GeneReviews" id="KCND2"/>
<dbReference type="HGNC" id="HGNC:6238">
    <property type="gene designation" value="KCND2"/>
</dbReference>
<dbReference type="HPA" id="ENSG00000184408">
    <property type="expression patterns" value="Tissue enriched (brain)"/>
</dbReference>
<dbReference type="MalaCards" id="KCND2"/>
<dbReference type="MIM" id="605410">
    <property type="type" value="gene"/>
</dbReference>
<dbReference type="neXtProt" id="NX_Q9NZV8"/>
<dbReference type="OpenTargets" id="ENSG00000184408"/>
<dbReference type="PharmGKB" id="PA30030"/>
<dbReference type="VEuPathDB" id="HostDB:ENSG00000184408"/>
<dbReference type="eggNOG" id="KOG4390">
    <property type="taxonomic scope" value="Eukaryota"/>
</dbReference>
<dbReference type="GeneTree" id="ENSGT00940000155472"/>
<dbReference type="HOGENOM" id="CLU_011722_9_1_1"/>
<dbReference type="InParanoid" id="Q9NZV8"/>
<dbReference type="OMA" id="SCMEVTT"/>
<dbReference type="OrthoDB" id="433309at2759"/>
<dbReference type="PAN-GO" id="Q9NZV8">
    <property type="GO annotations" value="8 GO annotations based on evolutionary models"/>
</dbReference>
<dbReference type="PhylomeDB" id="Q9NZV8"/>
<dbReference type="TreeFam" id="TF313103"/>
<dbReference type="PathwayCommons" id="Q9NZV8"/>
<dbReference type="Reactome" id="R-HSA-1296072">
    <property type="pathway name" value="Voltage gated Potassium channels"/>
</dbReference>
<dbReference type="Reactome" id="R-HSA-5576894">
    <property type="pathway name" value="Phase 1 - inactivation of fast Na+ channels"/>
</dbReference>
<dbReference type="SignaLink" id="Q9NZV8"/>
<dbReference type="SIGNOR" id="Q9NZV8"/>
<dbReference type="BioGRID-ORCS" id="3751">
    <property type="hits" value="14 hits in 1162 CRISPR screens"/>
</dbReference>
<dbReference type="ChiTaRS" id="KCND2">
    <property type="organism name" value="human"/>
</dbReference>
<dbReference type="GeneWiki" id="KCND2"/>
<dbReference type="GenomeRNAi" id="3751"/>
<dbReference type="Pharos" id="Q9NZV8">
    <property type="development level" value="Tclin"/>
</dbReference>
<dbReference type="PRO" id="PR:Q9NZV8"/>
<dbReference type="Proteomes" id="UP000005640">
    <property type="component" value="Chromosome 7"/>
</dbReference>
<dbReference type="RNAct" id="Q9NZV8">
    <property type="molecule type" value="protein"/>
</dbReference>
<dbReference type="Bgee" id="ENSG00000184408">
    <property type="expression patterns" value="Expressed in cerebellar vermis and 134 other cell types or tissues"/>
</dbReference>
<dbReference type="ExpressionAtlas" id="Q9NZV8">
    <property type="expression patterns" value="baseline and differential"/>
</dbReference>
<dbReference type="GO" id="GO:0070161">
    <property type="term" value="C:anchoring junction"/>
    <property type="evidence" value="ECO:0007669"/>
    <property type="project" value="UniProtKB-SubCell"/>
</dbReference>
<dbReference type="GO" id="GO:0043197">
    <property type="term" value="C:dendritic spine"/>
    <property type="evidence" value="ECO:0000250"/>
    <property type="project" value="UniProtKB"/>
</dbReference>
<dbReference type="GO" id="GO:0098982">
    <property type="term" value="C:GABA-ergic synapse"/>
    <property type="evidence" value="ECO:0007669"/>
    <property type="project" value="Ensembl"/>
</dbReference>
<dbReference type="GO" id="GO:0098978">
    <property type="term" value="C:glutamatergic synapse"/>
    <property type="evidence" value="ECO:0007669"/>
    <property type="project" value="Ensembl"/>
</dbReference>
<dbReference type="GO" id="GO:0071193">
    <property type="term" value="C:Kv4.2-KChIP2 channel complex"/>
    <property type="evidence" value="ECO:0000353"/>
    <property type="project" value="ComplexPortal"/>
</dbReference>
<dbReference type="GO" id="GO:0043025">
    <property type="term" value="C:neuronal cell body"/>
    <property type="evidence" value="ECO:0000318"/>
    <property type="project" value="GO_Central"/>
</dbReference>
<dbReference type="GO" id="GO:0032809">
    <property type="term" value="C:neuronal cell body membrane"/>
    <property type="evidence" value="ECO:0000250"/>
    <property type="project" value="UniProtKB"/>
</dbReference>
<dbReference type="GO" id="GO:0043204">
    <property type="term" value="C:perikaryon"/>
    <property type="evidence" value="ECO:0007669"/>
    <property type="project" value="UniProtKB-SubCell"/>
</dbReference>
<dbReference type="GO" id="GO:0005886">
    <property type="term" value="C:plasma membrane"/>
    <property type="evidence" value="ECO:0000314"/>
    <property type="project" value="UniProtKB"/>
</dbReference>
<dbReference type="GO" id="GO:0044853">
    <property type="term" value="C:plasma membrane raft"/>
    <property type="evidence" value="ECO:0000250"/>
    <property type="project" value="UniProtKB"/>
</dbReference>
<dbReference type="GO" id="GO:0045211">
    <property type="term" value="C:postsynaptic membrane"/>
    <property type="evidence" value="ECO:0000250"/>
    <property type="project" value="UniProtKB"/>
</dbReference>
<dbReference type="GO" id="GO:0099634">
    <property type="term" value="C:postsynaptic specialization membrane"/>
    <property type="evidence" value="ECO:0007669"/>
    <property type="project" value="Ensembl"/>
</dbReference>
<dbReference type="GO" id="GO:0008076">
    <property type="term" value="C:voltage-gated potassium channel complex"/>
    <property type="evidence" value="ECO:0000314"/>
    <property type="project" value="UniProtKB"/>
</dbReference>
<dbReference type="GO" id="GO:0005250">
    <property type="term" value="F:A-type (transient outward) potassium channel activity"/>
    <property type="evidence" value="ECO:0000314"/>
    <property type="project" value="UniProtKB"/>
</dbReference>
<dbReference type="GO" id="GO:0046872">
    <property type="term" value="F:metal ion binding"/>
    <property type="evidence" value="ECO:0007669"/>
    <property type="project" value="UniProtKB-KW"/>
</dbReference>
<dbReference type="GO" id="GO:1905030">
    <property type="term" value="F:voltage-gated monoatomic ion channel activity involved in regulation of postsynaptic membrane potential"/>
    <property type="evidence" value="ECO:0000318"/>
    <property type="project" value="GO_Central"/>
</dbReference>
<dbReference type="GO" id="GO:0005249">
    <property type="term" value="F:voltage-gated potassium channel activity"/>
    <property type="evidence" value="ECO:0000314"/>
    <property type="project" value="UniProtKB"/>
</dbReference>
<dbReference type="GO" id="GO:0001508">
    <property type="term" value="P:action potential"/>
    <property type="evidence" value="ECO:0000314"/>
    <property type="project" value="ComplexPortal"/>
</dbReference>
<dbReference type="GO" id="GO:0071456">
    <property type="term" value="P:cellular response to hypoxia"/>
    <property type="evidence" value="ECO:0000250"/>
    <property type="project" value="UniProtKB"/>
</dbReference>
<dbReference type="GO" id="GO:0007268">
    <property type="term" value="P:chemical synaptic transmission"/>
    <property type="evidence" value="ECO:0000304"/>
    <property type="project" value="UniProtKB"/>
</dbReference>
<dbReference type="GO" id="GO:0045475">
    <property type="term" value="P:locomotor rhythm"/>
    <property type="evidence" value="ECO:0007669"/>
    <property type="project" value="Ensembl"/>
</dbReference>
<dbReference type="GO" id="GO:0086009">
    <property type="term" value="P:membrane repolarization"/>
    <property type="evidence" value="ECO:0000314"/>
    <property type="project" value="ComplexPortal"/>
</dbReference>
<dbReference type="GO" id="GO:0006936">
    <property type="term" value="P:muscle contraction"/>
    <property type="evidence" value="ECO:0000314"/>
    <property type="project" value="ComplexPortal"/>
</dbReference>
<dbReference type="GO" id="GO:0019228">
    <property type="term" value="P:neuronal action potential"/>
    <property type="evidence" value="ECO:0007669"/>
    <property type="project" value="Ensembl"/>
</dbReference>
<dbReference type="GO" id="GO:0071805">
    <property type="term" value="P:potassium ion transmembrane transport"/>
    <property type="evidence" value="ECO:0000314"/>
    <property type="project" value="UniProtKB"/>
</dbReference>
<dbReference type="GO" id="GO:0051260">
    <property type="term" value="P:protein homooligomerization"/>
    <property type="evidence" value="ECO:0007669"/>
    <property type="project" value="InterPro"/>
</dbReference>
<dbReference type="GO" id="GO:0008016">
    <property type="term" value="P:regulation of heart contraction"/>
    <property type="evidence" value="ECO:0000303"/>
    <property type="project" value="ComplexPortal"/>
</dbReference>
<dbReference type="GO" id="GO:0019233">
    <property type="term" value="P:sensory perception of pain"/>
    <property type="evidence" value="ECO:0007669"/>
    <property type="project" value="Ensembl"/>
</dbReference>
<dbReference type="FunFam" id="1.10.287.70:FF:000073">
    <property type="entry name" value="Potassium voltage-gated channel subfamily D member 2"/>
    <property type="match status" value="1"/>
</dbReference>
<dbReference type="FunFam" id="1.10.287.70:FF:000111">
    <property type="entry name" value="Potassium voltage-gated channel subfamily D member 3"/>
    <property type="match status" value="1"/>
</dbReference>
<dbReference type="FunFam" id="1.20.120.350:FF:000016">
    <property type="entry name" value="Potassium voltage-gated channel subfamily D member 3"/>
    <property type="match status" value="1"/>
</dbReference>
<dbReference type="FunFam" id="3.30.710.10:FF:000004">
    <property type="entry name" value="Potassium voltage-gated channel subfamily D member 3"/>
    <property type="match status" value="1"/>
</dbReference>
<dbReference type="Gene3D" id="1.10.287.70">
    <property type="match status" value="1"/>
</dbReference>
<dbReference type="Gene3D" id="3.30.710.10">
    <property type="entry name" value="Potassium Channel Kv1.1, Chain A"/>
    <property type="match status" value="1"/>
</dbReference>
<dbReference type="Gene3D" id="1.20.120.350">
    <property type="entry name" value="Voltage-gated potassium channels. Chain C"/>
    <property type="match status" value="1"/>
</dbReference>
<dbReference type="InterPro" id="IPR000210">
    <property type="entry name" value="BTB/POZ_dom"/>
</dbReference>
<dbReference type="InterPro" id="IPR005821">
    <property type="entry name" value="Ion_trans_dom"/>
</dbReference>
<dbReference type="InterPro" id="IPR003968">
    <property type="entry name" value="K_chnl_volt-dep_Kv"/>
</dbReference>
<dbReference type="InterPro" id="IPR003975">
    <property type="entry name" value="K_chnl_volt-dep_Kv4"/>
</dbReference>
<dbReference type="InterPro" id="IPR004055">
    <property type="entry name" value="K_chnl_volt-dep_Kv4.2"/>
</dbReference>
<dbReference type="InterPro" id="IPR024587">
    <property type="entry name" value="K_chnl_volt-dep_Kv4_C"/>
</dbReference>
<dbReference type="InterPro" id="IPR021645">
    <property type="entry name" value="Shal-type_N"/>
</dbReference>
<dbReference type="InterPro" id="IPR011333">
    <property type="entry name" value="SKP1/BTB/POZ_sf"/>
</dbReference>
<dbReference type="InterPro" id="IPR003131">
    <property type="entry name" value="T1-type_BTB"/>
</dbReference>
<dbReference type="InterPro" id="IPR028325">
    <property type="entry name" value="VG_K_chnl"/>
</dbReference>
<dbReference type="InterPro" id="IPR027359">
    <property type="entry name" value="Volt_channel_dom_sf"/>
</dbReference>
<dbReference type="PANTHER" id="PTHR11537:SF265">
    <property type="entry name" value="POTASSIUM VOLTAGE-GATED CHANNEL SUBFAMILY D MEMBER 2"/>
    <property type="match status" value="1"/>
</dbReference>
<dbReference type="PANTHER" id="PTHR11537">
    <property type="entry name" value="VOLTAGE-GATED POTASSIUM CHANNEL"/>
    <property type="match status" value="1"/>
</dbReference>
<dbReference type="Pfam" id="PF02214">
    <property type="entry name" value="BTB_2"/>
    <property type="match status" value="1"/>
</dbReference>
<dbReference type="Pfam" id="PF11879">
    <property type="entry name" value="DUF3399"/>
    <property type="match status" value="1"/>
</dbReference>
<dbReference type="Pfam" id="PF00520">
    <property type="entry name" value="Ion_trans"/>
    <property type="match status" value="1"/>
</dbReference>
<dbReference type="Pfam" id="PF11601">
    <property type="entry name" value="Shal-type"/>
    <property type="match status" value="1"/>
</dbReference>
<dbReference type="PRINTS" id="PR00169">
    <property type="entry name" value="KCHANNEL"/>
</dbReference>
<dbReference type="PRINTS" id="PR01517">
    <property type="entry name" value="KV42CHANNEL"/>
</dbReference>
<dbReference type="PRINTS" id="PR01491">
    <property type="entry name" value="KVCHANNEL"/>
</dbReference>
<dbReference type="PRINTS" id="PR01497">
    <property type="entry name" value="SHALCHANNEL"/>
</dbReference>
<dbReference type="SMART" id="SM00225">
    <property type="entry name" value="BTB"/>
    <property type="match status" value="1"/>
</dbReference>
<dbReference type="SUPFAM" id="SSF54695">
    <property type="entry name" value="POZ domain"/>
    <property type="match status" value="1"/>
</dbReference>
<dbReference type="SUPFAM" id="SSF81324">
    <property type="entry name" value="Voltage-gated potassium channels"/>
    <property type="match status" value="1"/>
</dbReference>
<evidence type="ECO:0000250" key="1">
    <source>
        <dbReference type="UniProtKB" id="P63142"/>
    </source>
</evidence>
<evidence type="ECO:0000250" key="2">
    <source>
        <dbReference type="UniProtKB" id="Q63881"/>
    </source>
</evidence>
<evidence type="ECO:0000250" key="3">
    <source>
        <dbReference type="UniProtKB" id="Q9Z0V2"/>
    </source>
</evidence>
<evidence type="ECO:0000256" key="4">
    <source>
        <dbReference type="SAM" id="MobiDB-lite"/>
    </source>
</evidence>
<evidence type="ECO:0000269" key="5">
    <source>
    </source>
</evidence>
<evidence type="ECO:0000269" key="6">
    <source>
    </source>
</evidence>
<evidence type="ECO:0000269" key="7">
    <source>
    </source>
</evidence>
<evidence type="ECO:0000269" key="8">
    <source>
    </source>
</evidence>
<evidence type="ECO:0000269" key="9">
    <source>
    </source>
</evidence>
<evidence type="ECO:0000269" key="10">
    <source>
    </source>
</evidence>
<evidence type="ECO:0000269" key="11">
    <source>
    </source>
</evidence>
<evidence type="ECO:0000269" key="12">
    <source>
    </source>
</evidence>
<evidence type="ECO:0000269" key="13">
    <source>
    </source>
</evidence>
<evidence type="ECO:0000269" key="14">
    <source>
    </source>
</evidence>
<evidence type="ECO:0000269" key="15">
    <source>
    </source>
</evidence>
<evidence type="ECO:0000269" key="16">
    <source>
    </source>
</evidence>
<evidence type="ECO:0000269" key="17">
    <source>
    </source>
</evidence>
<evidence type="ECO:0000269" key="18">
    <source>
    </source>
</evidence>
<evidence type="ECO:0000269" key="19">
    <source>
    </source>
</evidence>
<evidence type="ECO:0000269" key="20">
    <source>
    </source>
</evidence>
<evidence type="ECO:0000269" key="21">
    <source>
    </source>
</evidence>
<evidence type="ECO:0000269" key="22">
    <source>
    </source>
</evidence>
<evidence type="ECO:0000269" key="23">
    <source>
    </source>
</evidence>
<evidence type="ECO:0000269" key="24">
    <source>
    </source>
</evidence>
<evidence type="ECO:0000269" key="25">
    <source>
    </source>
</evidence>
<evidence type="ECO:0000269" key="26">
    <source>
    </source>
</evidence>
<evidence type="ECO:0000269" key="27">
    <source>
    </source>
</evidence>
<evidence type="ECO:0000305" key="28"/>
<evidence type="ECO:0000305" key="29">
    <source>
    </source>
</evidence>
<evidence type="ECO:0000305" key="30">
    <source>
    </source>
</evidence>
<evidence type="ECO:0000305" key="31">
    <source>
    </source>
</evidence>
<evidence type="ECO:0000305" key="32">
    <source>
    </source>
</evidence>
<evidence type="ECO:0000305" key="33">
    <source>
    </source>
</evidence>
<evidence type="ECO:0000305" key="34">
    <source>
    </source>
</evidence>
<evidence type="ECO:0000305" key="35">
    <source>
    </source>
</evidence>
<evidence type="ECO:0000305" key="36">
    <source>
    </source>
</evidence>
<evidence type="ECO:0000312" key="37">
    <source>
        <dbReference type="HGNC" id="HGNC:6238"/>
    </source>
</evidence>
<evidence type="ECO:0007744" key="38">
    <source>
        <dbReference type="PDB" id="7E7Z"/>
    </source>
</evidence>
<evidence type="ECO:0007744" key="39">
    <source>
        <dbReference type="PDB" id="7E83"/>
    </source>
</evidence>
<evidence type="ECO:0007744" key="40">
    <source>
        <dbReference type="PDB" id="7E84"/>
    </source>
</evidence>
<evidence type="ECO:0007744" key="41">
    <source>
        <dbReference type="PDB" id="7E87"/>
    </source>
</evidence>
<evidence type="ECO:0007744" key="42">
    <source>
        <dbReference type="PDB" id="7E8B"/>
    </source>
</evidence>
<evidence type="ECO:0007744" key="43">
    <source>
        <dbReference type="PDB" id="7E8E"/>
    </source>
</evidence>
<evidence type="ECO:0007744" key="44">
    <source>
        <dbReference type="PDB" id="7E8H"/>
    </source>
</evidence>
<evidence type="ECO:0007744" key="45">
    <source>
        <dbReference type="PDB" id="7F0J"/>
    </source>
</evidence>
<evidence type="ECO:0007744" key="46">
    <source>
        <dbReference type="PDB" id="7F3F"/>
    </source>
</evidence>
<evidence type="ECO:0007744" key="47">
    <source>
        <dbReference type="PDB" id="7UK5"/>
    </source>
</evidence>
<evidence type="ECO:0007744" key="48">
    <source>
        <dbReference type="PDB" id="7UKC"/>
    </source>
</evidence>
<evidence type="ECO:0007744" key="49">
    <source>
        <dbReference type="PDB" id="7UKD"/>
    </source>
</evidence>
<evidence type="ECO:0007744" key="50">
    <source>
        <dbReference type="PDB" id="7UKE"/>
    </source>
</evidence>
<evidence type="ECO:0007744" key="51">
    <source>
        <dbReference type="PDB" id="7UKF"/>
    </source>
</evidence>
<evidence type="ECO:0007744" key="52">
    <source>
        <dbReference type="PDB" id="7UKG"/>
    </source>
</evidence>
<evidence type="ECO:0007744" key="53">
    <source>
        <dbReference type="PDB" id="7UKH"/>
    </source>
</evidence>
<evidence type="ECO:0007829" key="54">
    <source>
        <dbReference type="PDB" id="7F0J"/>
    </source>
</evidence>
<evidence type="ECO:0007829" key="55">
    <source>
        <dbReference type="PDB" id="7UKG"/>
    </source>
</evidence>
<evidence type="ECO:0007829" key="56">
    <source>
        <dbReference type="PDB" id="7UKH"/>
    </source>
</evidence>
<reference key="1">
    <citation type="journal article" date="1998" name="Am. J. Physiol.">
        <title>Isolation and characterization of the human gene encoding Ito: further diversity by alternative mRNA splicing.</title>
        <authorList>
            <person name="Kong W."/>
            <person name="Po S."/>
            <person name="Yamagishi T."/>
            <person name="Ashen M.D."/>
            <person name="Stetten G."/>
            <person name="Tomaselli G.F."/>
        </authorList>
    </citation>
    <scope>NUCLEOTIDE SEQUENCE [MRNA]</scope>
    <source>
        <tissue>Brain</tissue>
    </source>
</reference>
<reference key="2">
    <citation type="journal article" date="1999" name="DNA Res.">
        <title>Prediction of the coding sequences of unidentified human genes. XIV. The complete sequences of 100 new cDNA clones from brain which code for large proteins in vitro.</title>
        <authorList>
            <person name="Kikuno R."/>
            <person name="Nagase T."/>
            <person name="Ishikawa K."/>
            <person name="Hirosawa M."/>
            <person name="Miyajima N."/>
            <person name="Tanaka A."/>
            <person name="Kotani H."/>
            <person name="Nomura N."/>
            <person name="Ohara O."/>
        </authorList>
    </citation>
    <scope>NUCLEOTIDE SEQUENCE [LARGE SCALE MRNA]</scope>
    <source>
        <tissue>Brain</tissue>
    </source>
</reference>
<reference key="3">
    <citation type="journal article" date="1999" name="Recept. Channels">
        <title>Characterization of human Kv4.2 mediating a rapidly-inactivating transient voltage-sensitive K+ current.</title>
        <authorList>
            <person name="Zhu X.-R."/>
            <person name="Wulf A."/>
            <person name="Schwarz M."/>
            <person name="Isbrandt D."/>
            <person name="Pongs O."/>
        </authorList>
    </citation>
    <scope>NUCLEOTIDE SEQUENCE [MRNA]</scope>
    <scope>TISSUE SPECIFICITY</scope>
    <scope>FUNCTION</scope>
    <scope>TRANSPORTER ACTIVITY</scope>
</reference>
<reference key="4">
    <citation type="journal article" date="2000" name="Genomics">
        <title>Gene structures and expression profiles of three human KCND (Kv4) potassium channels mediating A-type currents I(TO) and I(SA).</title>
        <authorList>
            <person name="Isbrandt D."/>
            <person name="Leicher T."/>
            <person name="Waldschuetz R."/>
            <person name="Zhu X.-R."/>
            <person name="Luhmann U."/>
            <person name="Michel U."/>
            <person name="Sauter K."/>
            <person name="Pongs O."/>
        </authorList>
    </citation>
    <scope>NUCLEOTIDE SEQUENCE [GENOMIC DNA]</scope>
    <scope>TISSUE SPECIFICITY</scope>
    <source>
        <tissue>Brain cortex</tissue>
    </source>
</reference>
<reference key="5">
    <citation type="journal article" date="2003" name="Nature">
        <title>The DNA sequence of human chromosome 7.</title>
        <authorList>
            <person name="Hillier L.W."/>
            <person name="Fulton R.S."/>
            <person name="Fulton L.A."/>
            <person name="Graves T.A."/>
            <person name="Pepin K.H."/>
            <person name="Wagner-McPherson C."/>
            <person name="Layman D."/>
            <person name="Maas J."/>
            <person name="Jaeger S."/>
            <person name="Walker R."/>
            <person name="Wylie K."/>
            <person name="Sekhon M."/>
            <person name="Becker M.C."/>
            <person name="O'Laughlin M.D."/>
            <person name="Schaller M.E."/>
            <person name="Fewell G.A."/>
            <person name="Delehaunty K.D."/>
            <person name="Miner T.L."/>
            <person name="Nash W.E."/>
            <person name="Cordes M."/>
            <person name="Du H."/>
            <person name="Sun H."/>
            <person name="Edwards J."/>
            <person name="Bradshaw-Cordum H."/>
            <person name="Ali J."/>
            <person name="Andrews S."/>
            <person name="Isak A."/>
            <person name="Vanbrunt A."/>
            <person name="Nguyen C."/>
            <person name="Du F."/>
            <person name="Lamar B."/>
            <person name="Courtney L."/>
            <person name="Kalicki J."/>
            <person name="Ozersky P."/>
            <person name="Bielicki L."/>
            <person name="Scott K."/>
            <person name="Holmes A."/>
            <person name="Harkins R."/>
            <person name="Harris A."/>
            <person name="Strong C.M."/>
            <person name="Hou S."/>
            <person name="Tomlinson C."/>
            <person name="Dauphin-Kohlberg S."/>
            <person name="Kozlowicz-Reilly A."/>
            <person name="Leonard S."/>
            <person name="Rohlfing T."/>
            <person name="Rock S.M."/>
            <person name="Tin-Wollam A.-M."/>
            <person name="Abbott A."/>
            <person name="Minx P."/>
            <person name="Maupin R."/>
            <person name="Strowmatt C."/>
            <person name="Latreille P."/>
            <person name="Miller N."/>
            <person name="Johnson D."/>
            <person name="Murray J."/>
            <person name="Woessner J.P."/>
            <person name="Wendl M.C."/>
            <person name="Yang S.-P."/>
            <person name="Schultz B.R."/>
            <person name="Wallis J.W."/>
            <person name="Spieth J."/>
            <person name="Bieri T.A."/>
            <person name="Nelson J.O."/>
            <person name="Berkowicz N."/>
            <person name="Wohldmann P.E."/>
            <person name="Cook L.L."/>
            <person name="Hickenbotham M.T."/>
            <person name="Eldred J."/>
            <person name="Williams D."/>
            <person name="Bedell J.A."/>
            <person name="Mardis E.R."/>
            <person name="Clifton S.W."/>
            <person name="Chissoe S.L."/>
            <person name="Marra M.A."/>
            <person name="Raymond C."/>
            <person name="Haugen E."/>
            <person name="Gillett W."/>
            <person name="Zhou Y."/>
            <person name="James R."/>
            <person name="Phelps K."/>
            <person name="Iadanoto S."/>
            <person name="Bubb K."/>
            <person name="Simms E."/>
            <person name="Levy R."/>
            <person name="Clendenning J."/>
            <person name="Kaul R."/>
            <person name="Kent W.J."/>
            <person name="Furey T.S."/>
            <person name="Baertsch R.A."/>
            <person name="Brent M.R."/>
            <person name="Keibler E."/>
            <person name="Flicek P."/>
            <person name="Bork P."/>
            <person name="Suyama M."/>
            <person name="Bailey J.A."/>
            <person name="Portnoy M.E."/>
            <person name="Torrents D."/>
            <person name="Chinwalla A.T."/>
            <person name="Gish W.R."/>
            <person name="Eddy S.R."/>
            <person name="McPherson J.D."/>
            <person name="Olson M.V."/>
            <person name="Eichler E.E."/>
            <person name="Green E.D."/>
            <person name="Waterston R.H."/>
            <person name="Wilson R.K."/>
        </authorList>
    </citation>
    <scope>NUCLEOTIDE SEQUENCE [LARGE SCALE GENOMIC DNA]</scope>
</reference>
<reference key="6">
    <citation type="journal article" date="2004" name="Genome Res.">
        <title>The status, quality, and expansion of the NIH full-length cDNA project: the Mammalian Gene Collection (MGC).</title>
        <authorList>
            <consortium name="The MGC Project Team"/>
        </authorList>
    </citation>
    <scope>NUCLEOTIDE SEQUENCE [LARGE SCALE MRNA]</scope>
</reference>
<reference key="7">
    <citation type="journal article" date="2000" name="J. Neurosci.">
        <title>Localization and enhanced current density of the Kv4.2 potassium channel by interaction with the actin-binding protein filamin.</title>
        <authorList>
            <person name="Petrecca K."/>
            <person name="Miller D.M."/>
            <person name="Shrier A."/>
        </authorList>
    </citation>
    <scope>MUTAGENESIS OF 601-PRO--PRO-604</scope>
    <scope>SUBCELLULAR LOCATION</scope>
    <scope>INTERACTION WITH FLNA AND FLNC</scope>
</reference>
<reference key="8">
    <citation type="journal article" date="2000" name="Nature">
        <title>Modulation of A-type potassium channels by a family of calcium sensors.</title>
        <authorList>
            <person name="An W.F."/>
            <person name="Bowlby M.R."/>
            <person name="Betty M."/>
            <person name="Cao J."/>
            <person name="Ling H.-P."/>
            <person name="Mendoza G."/>
            <person name="Hinson J.W."/>
            <person name="Mattsson K.I."/>
            <person name="Strassle B.W."/>
            <person name="Trimmer J.S."/>
            <person name="Rhodes K.J."/>
        </authorList>
    </citation>
    <scope>INTERACTION WITH KCNIP1</scope>
</reference>
<reference key="9">
    <citation type="journal article" date="2001" name="J. Biol. Chem.">
        <title>Conserved Kv4 N-terminal domain critical for effects of Kv channel-interacting protein 2.2 on channel expression and gating.</title>
        <authorList>
            <person name="Baehring R."/>
            <person name="Dannenberg J."/>
            <person name="Peters H.C."/>
            <person name="Leicher T."/>
            <person name="Pongs O."/>
            <person name="Isbrandt D."/>
        </authorList>
    </citation>
    <scope>INTERACTION WITH KCNIP2</scope>
</reference>
<reference key="10">
    <citation type="journal article" date="2001" name="J. Physiol. (Lond.)">
        <title>Kinetic analysis of open- and closed-state inactivation transitions in human Kv4.2 A-type potassium channels.</title>
        <authorList>
            <person name="Baehring R."/>
            <person name="Boland L.M."/>
            <person name="Varghese A."/>
            <person name="Gebauer M."/>
            <person name="Pongs O."/>
        </authorList>
    </citation>
    <scope>FUNCTION</scope>
    <scope>TRANSPORTER ACTIVITY</scope>
    <scope>SUBCELLULAR LOCATION</scope>
    <scope>BIOPHYSICOCHEMICAL PROPERTIES</scope>
    <scope>DOMAIN</scope>
</reference>
<reference key="11">
    <citation type="journal article" date="2002" name="Basic Res. Cardiol.">
        <title>Expression of voltage-gated K+ channels in human atrium.</title>
        <authorList>
            <person name="Bertaso F."/>
            <person name="Sharpe C.C."/>
            <person name="Hendry B.M."/>
            <person name="James A.F."/>
        </authorList>
    </citation>
    <scope>TISSUE SPECIFICITY</scope>
</reference>
<reference key="12">
    <citation type="journal article" date="2002" name="J. Biol. Chem.">
        <title>Molecular cloning and characterization of CALP/KChIP4, a novel EF-hand protein interacting with presenilin 2 and voltage-gated potassium channel subunit Kv4.</title>
        <authorList>
            <person name="Morohashi Y."/>
            <person name="Hatano N."/>
            <person name="Ohya S."/>
            <person name="Takikawa R."/>
            <person name="Watabiki T."/>
            <person name="Takasugi N."/>
            <person name="Imaizumi Y."/>
            <person name="Tomita T."/>
            <person name="Iwatsubo T."/>
        </authorList>
    </citation>
    <scope>INTERACTION WITH KCNIP4</scope>
</reference>
<reference key="13">
    <citation type="journal article" date="2002" name="J. Neurosci.">
        <title>PKA modulation of Kv4.2-encoded A-type potassium channels requires formation of a supramolecular complex.</title>
        <authorList>
            <person name="Schrader L.A."/>
            <person name="Anderson A.E."/>
            <person name="Mayne A."/>
            <person name="Pfaffinger P.J."/>
            <person name="Sweatt J.D."/>
        </authorList>
    </citation>
    <scope>INTERACTION WITH KCNIP3</scope>
</reference>
<reference key="14">
    <citation type="journal article" date="2004" name="Biophys. J.">
        <title>N-type inactivation features of Kv4.2 channel gating.</title>
        <authorList>
            <person name="Gebauer M."/>
            <person name="Isbrandt D."/>
            <person name="Sauter K."/>
            <person name="Callsen B."/>
            <person name="Nolting A."/>
            <person name="Pongs O."/>
            <person name="Baehring R."/>
        </authorList>
    </citation>
    <scope>FUNCTION</scope>
    <scope>TRANSPORTER ACTIVITY</scope>
    <scope>SUBCELLULAR LOCATION</scope>
    <scope>DOMAIN</scope>
</reference>
<reference key="15">
    <citation type="journal article" date="2004" name="Biophys. J.">
        <title>Modulation of Kv4.2 channel expression and gating by dipeptidyl peptidase 10 (DPP10).</title>
        <authorList>
            <person name="Jerng H.H."/>
            <person name="Qian Y."/>
            <person name="Pfaffinger P.J."/>
        </authorList>
    </citation>
    <scope>FUNCTION</scope>
    <scope>TRANSPORTER ACTIVITY</scope>
    <scope>INTERACTION WITH DPP10 AND DPP6</scope>
    <scope>SUBCELLULAR LOCATION</scope>
</reference>
<reference key="16">
    <citation type="journal article" date="2004" name="Biochem. Biophys. Res. Commun.">
        <title>Protein-protein interactions of KChIP proteins and Kv4.2.</title>
        <authorList>
            <person name="Lin Y.-L."/>
            <person name="Chen C.Y."/>
            <person name="Cheng C.P."/>
            <person name="Chang L.S."/>
        </authorList>
    </citation>
    <scope>INTERACTION WITH KCNIP1 AND KCNIP2</scope>
    <scope>SUBUNIT</scope>
    <scope>DOMAIN</scope>
</reference>
<reference key="17">
    <citation type="journal article" date="2006" name="Neurobiol. Dis.">
        <title>A Kv4.2 truncation mutation in a patient with temporal lobe epilepsy.</title>
        <authorList>
            <person name="Singh B."/>
            <person name="Ogiwara I."/>
            <person name="Kaneda M."/>
            <person name="Tokonami N."/>
            <person name="Mazaki E."/>
            <person name="Baba K."/>
            <person name="Matsuda K."/>
            <person name="Inoue Y."/>
            <person name="Yamakawa K."/>
        </authorList>
    </citation>
    <scope>FUNCTION</scope>
    <scope>TRANSPORTER ACTIVITY</scope>
    <scope>SUBCELLULAR LOCATION</scope>
    <scope>SUBUNIT</scope>
    <scope>DOMAIN</scope>
    <scope>ROLE IN DISEASE</scope>
</reference>
<reference key="18">
    <citation type="journal article" date="2007" name="Mol. Neurobiol.">
        <title>Ionic channel function in action potential generation: current perspective.</title>
        <authorList>
            <person name="Baranauskas G."/>
        </authorList>
    </citation>
    <scope>REVIEW</scope>
</reference>
<reference key="19">
    <citation type="journal article" date="2008" name="Neurochem. Res.">
        <title>The neuronal Kv4 channel complex.</title>
        <authorList>
            <person name="Covarrubias M."/>
            <person name="Bhattacharji A."/>
            <person name="De Santiago-Castillo J.A."/>
            <person name="Dougherty K."/>
            <person name="Kaulin Y.A."/>
            <person name="Na-Phuket T.R."/>
            <person name="Wang G."/>
        </authorList>
    </citation>
    <scope>REVIEW</scope>
</reference>
<reference key="20">
    <citation type="journal article" date="2009" name="J. Gen. Physiol.">
        <title>Dynamic coupling of voltage sensor and gate involved in closed-state inactivation of Kv4.2 channels.</title>
        <authorList>
            <person name="Barghaan J."/>
            <person name="Baehring R."/>
        </authorList>
    </citation>
    <scope>FUNCTION</scope>
    <scope>TRANSPORTER ACTIVITY</scope>
    <scope>SUBCELLULAR LOCATION</scope>
    <scope>SUBUNIT</scope>
    <scope>MUTAGENESIS OF GLY-309; ARG-311; ILE-312; LEU-313; GLY-314; TYR-315; THR-316; LEU-317; LYS-318; SER-319; CYS-320; SER-322; GLU-323; LEU-324; LEU-327; LEU-328; PHE-329; VAL-397; ILE-398; ALA-399; PRO-401; 402-VAL--VAL-404; PRO-403; ILE-405; VAL-406; SER-407; ASN-408 AND PHE-409</scope>
</reference>
<reference key="21">
    <citation type="journal article" date="2014" name="J. Biol. Chem.">
        <title>The stoichiometry and biophysical properties of the Kv4 potassium channel complex with K+ channel-interacting protein (KChIP) subunits are variable, depending on the relative expression level.</title>
        <authorList>
            <person name="Kitazawa M."/>
            <person name="Kubo Y."/>
            <person name="Nakajo K."/>
        </authorList>
    </citation>
    <scope>FUNCTION</scope>
    <scope>TRANSPORTER ACTIVITY</scope>
    <scope>SUBCELLULAR LOCATION</scope>
    <scope>SUBUNIT</scope>
    <scope>INTERACTION WITH KCNIP4</scope>
</reference>
<reference key="22">
    <citation type="journal article" date="2004" name="Neuron">
        <title>Three-dimensional structure of I(to); Kv4.2-KChIP2 ion channels by electron microscopy at 21 Angstrom resolution.</title>
        <authorList>
            <person name="Kim L.A."/>
            <person name="Furst J."/>
            <person name="Gutierrez D."/>
            <person name="Butler M.H."/>
            <person name="Xu S."/>
            <person name="Goldstein S.A."/>
            <person name="Grigorieff N."/>
        </authorList>
    </citation>
    <scope>FUNCTION</scope>
    <scope>TRANSPORTER ACTIVITY</scope>
    <scope>STRUCTURE BY ELECTRON MICROSCOPY (21 ANGSTROMS) OF THE KCND2-KCNIP2 COMPLEX</scope>
    <scope>SUBCELLULAR LOCATION</scope>
    <scope>SUBUNIT</scope>
</reference>
<reference key="23">
    <citation type="journal article" date="2004" name="J. Biol. Chem.">
        <title>Ito channels are octameric complexes with four subunits of each Kv4.2 and K+ channel-interacting protein 2.</title>
        <authorList>
            <person name="Kim L.A."/>
            <person name="Furst J."/>
            <person name="Butler M.H."/>
            <person name="Xu S."/>
            <person name="Grigorieff N."/>
            <person name="Goldstein S.A."/>
        </authorList>
    </citation>
    <scope>FUNCTION</scope>
    <scope>TRANSPORTER ACTIVITY</scope>
    <scope>INTERACTION WITH KCNIP2</scope>
    <scope>SUBCELLULAR LOCATION</scope>
    <scope>SUBUNIT</scope>
</reference>
<reference key="24">
    <citation type="journal article" date="2006" name="J. Cell. Physiol.">
        <title>Voltage-dependent K+ channel acts as sex steroid sensor in endocrine cells of the human ovary.</title>
        <authorList>
            <person name="Kunz L."/>
            <person name="Ramsch R."/>
            <person name="Krieger A."/>
            <person name="Young K.A."/>
            <person name="Dissen G.A."/>
            <person name="Stouffer R.L."/>
            <person name="Ojeda S.R."/>
            <person name="Mayerhofer A."/>
        </authorList>
    </citation>
    <scope>TISSUE SPECIFICITY</scope>
</reference>
<reference key="25">
    <citation type="journal article" date="2004" name="Neuron">
        <title>Two N-terminal domains of Kv4 K(+) channels regulate binding to and modulation by KChIP1.</title>
        <authorList>
            <person name="Scannevin R.H."/>
            <person name="Wang K."/>
            <person name="Jow F."/>
            <person name="Megules J."/>
            <person name="Kopsco D.C."/>
            <person name="Edris W."/>
            <person name="Carroll K.C."/>
            <person name="Lu Q."/>
            <person name="Xu W."/>
            <person name="Xu Z."/>
            <person name="Katz A.H."/>
            <person name="Olland S."/>
            <person name="Lin L."/>
            <person name="Taylor M."/>
            <person name="Stahl M."/>
            <person name="Malakian K."/>
            <person name="Somers W."/>
            <person name="Mosyak L."/>
            <person name="Bowlby M.R."/>
            <person name="Chanda P."/>
            <person name="Rhodes K.J."/>
        </authorList>
    </citation>
    <scope>INTERACTION WITH KCNIP1</scope>
</reference>
<reference key="26">
    <citation type="journal article" date="2009" name="Circ. Res.">
        <title>Kv4 potassium channels form a tripartite complex with the anchoring protein SAP97 and CaMKII in cardiac myocytes.</title>
        <authorList>
            <person name="El-Haou S."/>
            <person name="Balse E."/>
            <person name="Neyroud N."/>
            <person name="Dilanian G."/>
            <person name="Gavillet B."/>
            <person name="Abriel H."/>
            <person name="Coulombe A."/>
            <person name="Jeromin A."/>
            <person name="Hatem S.N."/>
        </authorList>
    </citation>
    <scope>INTERACTION WITH DLG1</scope>
</reference>
<reference evidence="38 39 40 41 42 43 44 45 46" key="27">
    <citation type="journal article" date="2021" name="Nature">
        <title>Structural basis of gating modulation of Kv4 channel complexes.</title>
        <authorList>
            <person name="Kise Y."/>
            <person name="Kasuya G."/>
            <person name="Okamoto H.H."/>
            <person name="Yamanouchi D."/>
            <person name="Kobayashi K."/>
            <person name="Kusakizako T."/>
            <person name="Nishizawa T."/>
            <person name="Nakajo K."/>
            <person name="Nureki O."/>
        </authorList>
    </citation>
    <scope>STRUCTURE BY ELECTRON MICROSCOPY (2.90 ANGSTROMS) IN COMPLEX WITH ZINC; KCNIP1; DPP6</scope>
    <scope>SUBUNIT</scope>
    <scope>FUNCTION</scope>
    <scope>TRANSPORTER ACTIVITY</scope>
    <scope>TOPOLOGY</scope>
</reference>
<reference evidence="47 48 49 50 51 52 53" key="28">
    <citation type="journal article" date="2022" name="Mol. Cell">
        <title>Activation and closed-state inactivation mechanisms of the human voltage-gated KV4 channel complexes.</title>
        <authorList>
            <person name="Ye W."/>
            <person name="Zhao H."/>
            <person name="Dai Y."/>
            <person name="Wang Y."/>
            <person name="Lo Y.H."/>
            <person name="Jan L.Y."/>
            <person name="Lee C.H."/>
        </authorList>
    </citation>
    <scope>STRUCTURE BY ELECTRON MICROSCOPY (2.24 ANGSTROMS) OF 1-524 IN COMPLEX WITH KCNIP2; DPP6; POTASSIUM AND ZINC</scope>
    <scope>FUNCTION</scope>
    <scope>TRANSPORTER ACTIVITY</scope>
    <scope>SUBUNIT</scope>
    <scope>DOMAIN</scope>
</reference>
<reference key="29">
    <citation type="journal article" date="2014" name="Hum. Mol. Genet.">
        <title>Exome sequencing identifies de novo gain of function missense mutation in KCND2 in identical twins with autism and seizures that slows potassium channel inactivation.</title>
        <authorList>
            <person name="Lee H."/>
            <person name="Lin M.C."/>
            <person name="Kornblum H.I."/>
            <person name="Papazian D.M."/>
            <person name="Nelson S.F."/>
        </authorList>
    </citation>
    <scope>VARIANT MET-404</scope>
    <scope>CHARACTERIZATION OF VARIANT MET-404</scope>
    <scope>FUNCTION</scope>
    <scope>TRANSPORTER ACTIVITY</scope>
    <scope>SUBCELLULAR LOCATION</scope>
</reference>